<gene>
    <name type="primary">COX6B2</name>
</gene>
<comment type="function">
    <text evidence="2">Component of the cytochrome c oxidase, the last enzyme in the mitochondrial electron transport chain which drives oxidative phosphorylation. The respiratory chain contains 3 multisubunit complexes succinate dehydrogenase (complex II, CII), ubiquinol-cytochrome c oxidoreductase (cytochrome b-c1 complex, complex III, CIII) and cytochrome c oxidase (complex IV, CIV), that cooperate to transfer electrons derived from NADH and succinate to molecular oxygen, creating an electrochemical gradient over the inner membrane that drives transmembrane transport and the ATP synthase. Cytochrome c oxidase is the component of the respiratory chain that catalyzes the reduction of oxygen to water. Electrons originating from reduced cytochrome c in the intermembrane space (IMS) are transferred via the dinuclear copper A center (CU(A)) of subunit 2 and heme A of subunit 1 to the active site in subunit 1, a binuclear center (BNC) formed by heme A3 and copper B (CU(B)). The BNC reduces molecular oxygen to 2 water molecules using 4 electrons from cytochrome c in the IMS and 4 protons from the mitochondrial matrix.</text>
</comment>
<comment type="pathway">
    <text evidence="2">Energy metabolism; oxidative phosphorylation.</text>
</comment>
<comment type="subunit">
    <text evidence="1">Component of the cytochrome c oxidase (complex IV, CIV), a multisubunit enzyme composed of 14 subunits. The complex is composed of a catalytic core of 3 subunits MT-CO1, MT-CO2 and MT-CO3, encoded in the mitochondrial DNA, and 11 supernumerary subunits COX4I1 (or COX4I2), COX5A, COX5B, COX6A1 (or COX6A2), COX6B1 (or COX6B2), COX6C, COX7A2 (or COX7A1), COX7B, COX7C, COX8A and NDUFA4, which are encoded in the nuclear genome (By similarity). The complex exists as a monomer or a dimer and forms supercomplexes (SCs) in the inner mitochondrial membrane with NADH-ubiquinone oxidoreductase (complex I, CI) and ubiquinol-cytochrome c oxidoreductase (cytochrome b-c1 complex, complex III, CIII), resulting in different assemblies (supercomplex SCI(1)III(2)IV(1) and megacomplex MCI(2)III(2)IV(2)) (By similarity).</text>
</comment>
<comment type="interaction">
    <interactant intactId="EBI-10291911">
        <id>Q6YFQ2</id>
    </interactant>
    <interactant intactId="EBI-741729">
        <id>Q96NE9</id>
        <label>FRMD6</label>
    </interactant>
    <organismsDiffer>false</organismsDiffer>
    <experiments>3</experiments>
</comment>
<comment type="interaction">
    <interactant intactId="EBI-10291911">
        <id>Q6YFQ2</id>
    </interactant>
    <interactant intactId="EBI-9027467">
        <id>O75360</id>
        <label>PROP1</label>
    </interactant>
    <organismsDiffer>false</organismsDiffer>
    <experiments>3</experiments>
</comment>
<comment type="subcellular location">
    <subcellularLocation>
        <location evidence="1">Mitochondrion inner membrane</location>
        <topology evidence="1">Peripheral membrane protein</topology>
        <orientation evidence="1">Intermembrane side</orientation>
    </subcellularLocation>
</comment>
<comment type="tissue specificity">
    <text evidence="5 6">Testis specific. Weak expression in thymus and heart. Expressed in cancer cell lines.</text>
</comment>
<comment type="similarity">
    <text evidence="7">Belongs to the cytochrome c oxidase subunit 6B family.</text>
</comment>
<name>CX6B2_HUMAN</name>
<reference key="1">
    <citation type="journal article" date="2003" name="Mol. Reprod. Dev.">
        <title>Cytochrome c oxidase of mammals contains a testes-specific isoform of subunit VIb -- the counterpart to testes-specific cytochrome c?</title>
        <authorList>
            <person name="Huttemann M."/>
            <person name="Jaradat S."/>
            <person name="Grossman L.I."/>
        </authorList>
    </citation>
    <scope>NUCLEOTIDE SEQUENCE [MRNA]</scope>
    <scope>TISSUE SPECIFICITY</scope>
    <source>
        <tissue>Testis</tissue>
    </source>
</reference>
<reference key="2">
    <citation type="journal article" date="2004" name="Nat. Genet.">
        <title>Complete sequencing and characterization of 21,243 full-length human cDNAs.</title>
        <authorList>
            <person name="Ota T."/>
            <person name="Suzuki Y."/>
            <person name="Nishikawa T."/>
            <person name="Otsuki T."/>
            <person name="Sugiyama T."/>
            <person name="Irie R."/>
            <person name="Wakamatsu A."/>
            <person name="Hayashi K."/>
            <person name="Sato H."/>
            <person name="Nagai K."/>
            <person name="Kimura K."/>
            <person name="Makita H."/>
            <person name="Sekine M."/>
            <person name="Obayashi M."/>
            <person name="Nishi T."/>
            <person name="Shibahara T."/>
            <person name="Tanaka T."/>
            <person name="Ishii S."/>
            <person name="Yamamoto J."/>
            <person name="Saito K."/>
            <person name="Kawai Y."/>
            <person name="Isono Y."/>
            <person name="Nakamura Y."/>
            <person name="Nagahari K."/>
            <person name="Murakami K."/>
            <person name="Yasuda T."/>
            <person name="Iwayanagi T."/>
            <person name="Wagatsuma M."/>
            <person name="Shiratori A."/>
            <person name="Sudo H."/>
            <person name="Hosoiri T."/>
            <person name="Kaku Y."/>
            <person name="Kodaira H."/>
            <person name="Kondo H."/>
            <person name="Sugawara M."/>
            <person name="Takahashi M."/>
            <person name="Kanda K."/>
            <person name="Yokoi T."/>
            <person name="Furuya T."/>
            <person name="Kikkawa E."/>
            <person name="Omura Y."/>
            <person name="Abe K."/>
            <person name="Kamihara K."/>
            <person name="Katsuta N."/>
            <person name="Sato K."/>
            <person name="Tanikawa M."/>
            <person name="Yamazaki M."/>
            <person name="Ninomiya K."/>
            <person name="Ishibashi T."/>
            <person name="Yamashita H."/>
            <person name="Murakawa K."/>
            <person name="Fujimori K."/>
            <person name="Tanai H."/>
            <person name="Kimata M."/>
            <person name="Watanabe M."/>
            <person name="Hiraoka S."/>
            <person name="Chiba Y."/>
            <person name="Ishida S."/>
            <person name="Ono Y."/>
            <person name="Takiguchi S."/>
            <person name="Watanabe S."/>
            <person name="Yosida M."/>
            <person name="Hotuta T."/>
            <person name="Kusano J."/>
            <person name="Kanehori K."/>
            <person name="Takahashi-Fujii A."/>
            <person name="Hara H."/>
            <person name="Tanase T.-O."/>
            <person name="Nomura Y."/>
            <person name="Togiya S."/>
            <person name="Komai F."/>
            <person name="Hara R."/>
            <person name="Takeuchi K."/>
            <person name="Arita M."/>
            <person name="Imose N."/>
            <person name="Musashino K."/>
            <person name="Yuuki H."/>
            <person name="Oshima A."/>
            <person name="Sasaki N."/>
            <person name="Aotsuka S."/>
            <person name="Yoshikawa Y."/>
            <person name="Matsunawa H."/>
            <person name="Ichihara T."/>
            <person name="Shiohata N."/>
            <person name="Sano S."/>
            <person name="Moriya S."/>
            <person name="Momiyama H."/>
            <person name="Satoh N."/>
            <person name="Takami S."/>
            <person name="Terashima Y."/>
            <person name="Suzuki O."/>
            <person name="Nakagawa S."/>
            <person name="Senoh A."/>
            <person name="Mizoguchi H."/>
            <person name="Goto Y."/>
            <person name="Shimizu F."/>
            <person name="Wakebe H."/>
            <person name="Hishigaki H."/>
            <person name="Watanabe T."/>
            <person name="Sugiyama A."/>
            <person name="Takemoto M."/>
            <person name="Kawakami B."/>
            <person name="Yamazaki M."/>
            <person name="Watanabe K."/>
            <person name="Kumagai A."/>
            <person name="Itakura S."/>
            <person name="Fukuzumi Y."/>
            <person name="Fujimori Y."/>
            <person name="Komiyama M."/>
            <person name="Tashiro H."/>
            <person name="Tanigami A."/>
            <person name="Fujiwara T."/>
            <person name="Ono T."/>
            <person name="Yamada K."/>
            <person name="Fujii Y."/>
            <person name="Ozaki K."/>
            <person name="Hirao M."/>
            <person name="Ohmori Y."/>
            <person name="Kawabata A."/>
            <person name="Hikiji T."/>
            <person name="Kobatake N."/>
            <person name="Inagaki H."/>
            <person name="Ikema Y."/>
            <person name="Okamoto S."/>
            <person name="Okitani R."/>
            <person name="Kawakami T."/>
            <person name="Noguchi S."/>
            <person name="Itoh T."/>
            <person name="Shigeta K."/>
            <person name="Senba T."/>
            <person name="Matsumura K."/>
            <person name="Nakajima Y."/>
            <person name="Mizuno T."/>
            <person name="Morinaga M."/>
            <person name="Sasaki M."/>
            <person name="Togashi T."/>
            <person name="Oyama M."/>
            <person name="Hata H."/>
            <person name="Watanabe M."/>
            <person name="Komatsu T."/>
            <person name="Mizushima-Sugano J."/>
            <person name="Satoh T."/>
            <person name="Shirai Y."/>
            <person name="Takahashi Y."/>
            <person name="Nakagawa K."/>
            <person name="Okumura K."/>
            <person name="Nagase T."/>
            <person name="Nomura N."/>
            <person name="Kikuchi H."/>
            <person name="Masuho Y."/>
            <person name="Yamashita R."/>
            <person name="Nakai K."/>
            <person name="Yada T."/>
            <person name="Nakamura Y."/>
            <person name="Ohara O."/>
            <person name="Isogai T."/>
            <person name="Sugano S."/>
        </authorList>
    </citation>
    <scope>NUCLEOTIDE SEQUENCE [LARGE SCALE MRNA]</scope>
    <source>
        <tissue>Testis</tissue>
    </source>
</reference>
<reference key="3">
    <citation type="journal article" date="2004" name="Genome Res.">
        <title>The status, quality, and expansion of the NIH full-length cDNA project: the Mammalian Gene Collection (MGC).</title>
        <authorList>
            <consortium name="The MGC Project Team"/>
        </authorList>
    </citation>
    <scope>NUCLEOTIDE SEQUENCE [LARGE SCALE MRNA]</scope>
    <source>
        <tissue>Testis</tissue>
    </source>
</reference>
<reference key="4">
    <citation type="journal article" date="2005" name="Proc. Natl. Acad. Sci. U.S.A.">
        <title>Identification of cancer/testis-antigen genes by massively parallel signature sequencing.</title>
        <authorList>
            <person name="Chen Y.-T."/>
            <person name="Scanlan M.J."/>
            <person name="Venditti C.A."/>
            <person name="Chua R."/>
            <person name="Theiler G."/>
            <person name="Stevenson B.J."/>
            <person name="Iseli C."/>
            <person name="Gure A.O."/>
            <person name="Vasicek T."/>
            <person name="Strausberg R.L."/>
            <person name="Jongeneel C.V."/>
            <person name="Old L.J."/>
            <person name="Simpson A.J.G."/>
        </authorList>
    </citation>
    <scope>TISSUE SPECIFICITY</scope>
    <scope>IDENTIFICATION AS A CANCER/TESTIS ANTIGEN</scope>
</reference>
<dbReference type="EMBL" id="AY152398">
    <property type="protein sequence ID" value="AAN46751.1"/>
    <property type="molecule type" value="mRNA"/>
</dbReference>
<dbReference type="EMBL" id="AK057427">
    <property type="protein sequence ID" value="BAB71481.2"/>
    <property type="molecule type" value="mRNA"/>
</dbReference>
<dbReference type="EMBL" id="BC026123">
    <property type="protein sequence ID" value="AAH26123.3"/>
    <property type="molecule type" value="mRNA"/>
</dbReference>
<dbReference type="EMBL" id="BC100899">
    <property type="protein sequence ID" value="AAI00900.1"/>
    <property type="molecule type" value="mRNA"/>
</dbReference>
<dbReference type="EMBL" id="BC100900">
    <property type="protein sequence ID" value="AAI00901.1"/>
    <property type="molecule type" value="mRNA"/>
</dbReference>
<dbReference type="EMBL" id="BC100901">
    <property type="protein sequence ID" value="AAI00902.1"/>
    <property type="molecule type" value="mRNA"/>
</dbReference>
<dbReference type="EMBL" id="BC100902">
    <property type="protein sequence ID" value="AAI00903.1"/>
    <property type="molecule type" value="mRNA"/>
</dbReference>
<dbReference type="CCDS" id="CCDS42630.1"/>
<dbReference type="RefSeq" id="NP_001356727.1">
    <property type="nucleotide sequence ID" value="NM_001369798.1"/>
</dbReference>
<dbReference type="RefSeq" id="NP_001356728.1">
    <property type="nucleotide sequence ID" value="NM_001369799.1"/>
</dbReference>
<dbReference type="RefSeq" id="NP_001356729.1">
    <property type="nucleotide sequence ID" value="NM_001369800.1"/>
</dbReference>
<dbReference type="RefSeq" id="NP_001423064.1">
    <property type="nucleotide sequence ID" value="NM_001436135.1"/>
</dbReference>
<dbReference type="RefSeq" id="NP_653214.2">
    <property type="nucleotide sequence ID" value="NM_144613.4"/>
</dbReference>
<dbReference type="SMR" id="Q6YFQ2"/>
<dbReference type="BioGRID" id="125940">
    <property type="interactions" value="4"/>
</dbReference>
<dbReference type="FunCoup" id="Q6YFQ2">
    <property type="interactions" value="520"/>
</dbReference>
<dbReference type="IntAct" id="Q6YFQ2">
    <property type="interactions" value="3"/>
</dbReference>
<dbReference type="STRING" id="9606.ENSP00000467266"/>
<dbReference type="TCDB" id="3.D.4.11.1">
    <property type="family name" value="the proton-translocating cytochrome oxidase (cox) superfamily"/>
</dbReference>
<dbReference type="iPTMnet" id="Q6YFQ2"/>
<dbReference type="PhosphoSitePlus" id="Q6YFQ2"/>
<dbReference type="BioMuta" id="COX6B2"/>
<dbReference type="DMDM" id="74738324"/>
<dbReference type="PaxDb" id="9606-ENSP00000467266"/>
<dbReference type="Antibodypedia" id="33080">
    <property type="antibodies" value="130 antibodies from 22 providers"/>
</dbReference>
<dbReference type="DNASU" id="125965"/>
<dbReference type="Ensembl" id="ENST00000326529.9">
    <property type="protein sequence ID" value="ENSP00000320672.3"/>
    <property type="gene ID" value="ENSG00000160471.13"/>
</dbReference>
<dbReference type="Ensembl" id="ENST00000588572.6">
    <property type="protein sequence ID" value="ENSP00000467959.1"/>
    <property type="gene ID" value="ENSG00000160471.13"/>
</dbReference>
<dbReference type="Ensembl" id="ENST00000589467.1">
    <property type="protein sequence ID" value="ENSP00000476768.1"/>
    <property type="gene ID" value="ENSG00000160471.13"/>
</dbReference>
<dbReference type="Ensembl" id="ENST00000590900.5">
    <property type="protein sequence ID" value="ENSP00000467128.1"/>
    <property type="gene ID" value="ENSG00000160471.13"/>
</dbReference>
<dbReference type="Ensembl" id="ENST00000593184.5">
    <property type="protein sequence ID" value="ENSP00000467266.1"/>
    <property type="gene ID" value="ENSG00000160471.13"/>
</dbReference>
<dbReference type="GeneID" id="125965"/>
<dbReference type="KEGG" id="hsa:125965"/>
<dbReference type="MANE-Select" id="ENST00000326529.9">
    <property type="protein sequence ID" value="ENSP00000320672.3"/>
    <property type="RefSeq nucleotide sequence ID" value="NM_144613.5"/>
    <property type="RefSeq protein sequence ID" value="NP_653214.2"/>
</dbReference>
<dbReference type="UCSC" id="uc002qkn.4">
    <property type="organism name" value="human"/>
</dbReference>
<dbReference type="AGR" id="HGNC:24380"/>
<dbReference type="CTD" id="125965"/>
<dbReference type="DisGeNET" id="125965"/>
<dbReference type="GeneCards" id="COX6B2"/>
<dbReference type="HGNC" id="HGNC:24380">
    <property type="gene designation" value="COX6B2"/>
</dbReference>
<dbReference type="HPA" id="ENSG00000160471">
    <property type="expression patterns" value="Tissue enriched (testis)"/>
</dbReference>
<dbReference type="MalaCards" id="COX6B2"/>
<dbReference type="MIM" id="618127">
    <property type="type" value="gene"/>
</dbReference>
<dbReference type="neXtProt" id="NX_Q6YFQ2"/>
<dbReference type="OpenTargets" id="ENSG00000160471"/>
<dbReference type="PharmGKB" id="PA134869389"/>
<dbReference type="VEuPathDB" id="HostDB:ENSG00000160471"/>
<dbReference type="eggNOG" id="KOG3057">
    <property type="taxonomic scope" value="Eukaryota"/>
</dbReference>
<dbReference type="GeneTree" id="ENSGT00940000162621"/>
<dbReference type="HOGENOM" id="CLU_133964_3_1_1"/>
<dbReference type="InParanoid" id="Q6YFQ2"/>
<dbReference type="OMA" id="QVQRWTE"/>
<dbReference type="OrthoDB" id="1107506at2759"/>
<dbReference type="PAN-GO" id="Q6YFQ2">
    <property type="GO annotations" value="2 GO annotations based on evolutionary models"/>
</dbReference>
<dbReference type="PhylomeDB" id="Q6YFQ2"/>
<dbReference type="PathwayCommons" id="Q6YFQ2"/>
<dbReference type="Reactome" id="R-HSA-5628897">
    <property type="pathway name" value="TP53 Regulates Metabolic Genes"/>
</dbReference>
<dbReference type="Reactome" id="R-HSA-611105">
    <property type="pathway name" value="Respiratory electron transport"/>
</dbReference>
<dbReference type="Reactome" id="R-HSA-9707564">
    <property type="pathway name" value="Cytoprotection by HMOX1"/>
</dbReference>
<dbReference type="Reactome" id="R-HSA-9864848">
    <property type="pathway name" value="Complex IV assembly"/>
</dbReference>
<dbReference type="SignaLink" id="Q6YFQ2"/>
<dbReference type="UniPathway" id="UPA00705"/>
<dbReference type="BioGRID-ORCS" id="125965">
    <property type="hits" value="21 hits in 1154 CRISPR screens"/>
</dbReference>
<dbReference type="GenomeRNAi" id="125965"/>
<dbReference type="Pharos" id="Q6YFQ2">
    <property type="development level" value="Tbio"/>
</dbReference>
<dbReference type="PRO" id="PR:Q6YFQ2"/>
<dbReference type="Proteomes" id="UP000005640">
    <property type="component" value="Chromosome 19"/>
</dbReference>
<dbReference type="RNAct" id="Q6YFQ2">
    <property type="molecule type" value="protein"/>
</dbReference>
<dbReference type="Bgee" id="ENSG00000160471">
    <property type="expression patterns" value="Expressed in right testis and 117 other cell types or tissues"/>
</dbReference>
<dbReference type="GO" id="GO:0030061">
    <property type="term" value="C:mitochondrial crista"/>
    <property type="evidence" value="ECO:0000314"/>
    <property type="project" value="MGI"/>
</dbReference>
<dbReference type="GO" id="GO:0005743">
    <property type="term" value="C:mitochondrial inner membrane"/>
    <property type="evidence" value="ECO:0000304"/>
    <property type="project" value="Reactome"/>
</dbReference>
<dbReference type="GO" id="GO:0005739">
    <property type="term" value="C:mitochondrion"/>
    <property type="evidence" value="ECO:0006056"/>
    <property type="project" value="FlyBase"/>
</dbReference>
<dbReference type="GO" id="GO:0045277">
    <property type="term" value="C:respiratory chain complex IV"/>
    <property type="evidence" value="ECO:0007669"/>
    <property type="project" value="InterPro"/>
</dbReference>
<dbReference type="GO" id="GO:0006119">
    <property type="term" value="P:oxidative phosphorylation"/>
    <property type="evidence" value="ECO:0007669"/>
    <property type="project" value="UniProtKB-UniPathway"/>
</dbReference>
<dbReference type="CDD" id="cd00926">
    <property type="entry name" value="Cyt_c_Oxidase_VIb"/>
    <property type="match status" value="1"/>
</dbReference>
<dbReference type="FunFam" id="1.10.10.140:FF:000005">
    <property type="entry name" value="Cytochrome c oxidase subunit"/>
    <property type="match status" value="1"/>
</dbReference>
<dbReference type="Gene3D" id="1.10.10.140">
    <property type="entry name" value="Cytochrome c oxidase, subunit VIb"/>
    <property type="match status" value="1"/>
</dbReference>
<dbReference type="InterPro" id="IPR048280">
    <property type="entry name" value="COX6B-like"/>
</dbReference>
<dbReference type="InterPro" id="IPR036549">
    <property type="entry name" value="CX6/COA6-like_sf"/>
</dbReference>
<dbReference type="InterPro" id="IPR003213">
    <property type="entry name" value="Cyt_c_oxidase_su6B"/>
</dbReference>
<dbReference type="PANTHER" id="PTHR11387">
    <property type="entry name" value="CYTOCHROME C OXIDASE SUBUNIT 6B"/>
    <property type="match status" value="1"/>
</dbReference>
<dbReference type="Pfam" id="PF02297">
    <property type="entry name" value="COX6B"/>
    <property type="match status" value="1"/>
</dbReference>
<dbReference type="PIRSF" id="PIRSF000278">
    <property type="entry name" value="Cyt_c_oxidase_6B"/>
    <property type="match status" value="1"/>
</dbReference>
<dbReference type="SUPFAM" id="SSF47694">
    <property type="entry name" value="Cytochrome c oxidase subunit h"/>
    <property type="match status" value="1"/>
</dbReference>
<dbReference type="PROSITE" id="PS51808">
    <property type="entry name" value="CHCH"/>
    <property type="match status" value="1"/>
</dbReference>
<organism>
    <name type="scientific">Homo sapiens</name>
    <name type="common">Human</name>
    <dbReference type="NCBI Taxonomy" id="9606"/>
    <lineage>
        <taxon>Eukaryota</taxon>
        <taxon>Metazoa</taxon>
        <taxon>Chordata</taxon>
        <taxon>Craniata</taxon>
        <taxon>Vertebrata</taxon>
        <taxon>Euteleostomi</taxon>
        <taxon>Mammalia</taxon>
        <taxon>Eutheria</taxon>
        <taxon>Euarchontoglires</taxon>
        <taxon>Primates</taxon>
        <taxon>Haplorrhini</taxon>
        <taxon>Catarrhini</taxon>
        <taxon>Hominidae</taxon>
        <taxon>Homo</taxon>
    </lineage>
</organism>
<protein>
    <recommendedName>
        <fullName>Cytochrome c oxidase subunit 6B2</fullName>
    </recommendedName>
    <alternativeName>
        <fullName>Cancer/testis antigen 59</fullName>
        <shortName>CT59</shortName>
    </alternativeName>
    <alternativeName>
        <fullName>Cytochrome c oxidase subunit VIb isoform 2</fullName>
        <shortName>COX VIb-2</shortName>
    </alternativeName>
    <alternativeName>
        <fullName>Cytochrome c oxidase subunit VIb, testis-specific isoform</fullName>
    </alternativeName>
</protein>
<keyword id="KW-1015">Disulfide bond</keyword>
<keyword id="KW-0472">Membrane</keyword>
<keyword id="KW-0496">Mitochondrion</keyword>
<keyword id="KW-0999">Mitochondrion inner membrane</keyword>
<keyword id="KW-1185">Reference proteome</keyword>
<accession>Q6YFQ2</accession>
<accession>Q7L1R4</accession>
<accession>Q96DL5</accession>
<feature type="chain" id="PRO_0000194921" description="Cytochrome c oxidase subunit 6B2">
    <location>
        <begin position="1"/>
        <end position="88"/>
    </location>
</feature>
<feature type="domain" description="CHCH" evidence="3">
    <location>
        <begin position="29"/>
        <end position="75"/>
    </location>
</feature>
<feature type="region of interest" description="Disordered" evidence="4">
    <location>
        <begin position="1"/>
        <end position="22"/>
    </location>
</feature>
<feature type="short sequence motif" description="Cx9C motif" evidence="3">
    <location>
        <begin position="32"/>
        <end position="42"/>
    </location>
</feature>
<feature type="short sequence motif" description="Cx10C motif" evidence="3">
    <location>
        <begin position="56"/>
        <end position="67"/>
    </location>
</feature>
<feature type="disulfide bond" evidence="3">
    <location>
        <begin position="32"/>
        <end position="67"/>
    </location>
</feature>
<feature type="disulfide bond" evidence="3">
    <location>
        <begin position="42"/>
        <end position="56"/>
    </location>
</feature>
<sequence>MLDVEAQEPPKGKWSTPPFDPRFPSQNQIRNCYQNFLDYHRCLKTRTRRGKSTQPCEYYFRVYHSLCPISWVESWNEQIKNGIFAGKI</sequence>
<proteinExistence type="evidence at protein level"/>
<evidence type="ECO:0000250" key="1">
    <source>
        <dbReference type="UniProtKB" id="P00429"/>
    </source>
</evidence>
<evidence type="ECO:0000250" key="2">
    <source>
        <dbReference type="UniProtKB" id="Q01519"/>
    </source>
</evidence>
<evidence type="ECO:0000255" key="3">
    <source>
        <dbReference type="PROSITE-ProRule" id="PRU01150"/>
    </source>
</evidence>
<evidence type="ECO:0000256" key="4">
    <source>
        <dbReference type="SAM" id="MobiDB-lite"/>
    </source>
</evidence>
<evidence type="ECO:0000269" key="5">
    <source>
    </source>
</evidence>
<evidence type="ECO:0000269" key="6">
    <source>
    </source>
</evidence>
<evidence type="ECO:0000305" key="7"/>